<accession>P13292</accession>
<name>US02_HHV2H</name>
<proteinExistence type="evidence at protein level"/>
<sequence length="291" mass="32781">MGVVVVSVVTLLDQRNALPRTSADASPALWSFLLRQCRILASEPLGTPVVVRPANLRRLAEPLMDLPKFTRPIVRTRSCRCPPNTTTGLFAEDDPLESIEILDAPACFRLLHQERPGPHRLYHLWVVGAADLCVPFFEYAQKTRLGFRFIATKTNDAWVGEPWPLPDRFLPERTVSWTPFPAAPNHPLENLLSRYEYQYGVVVPGDRERSCLRWLRSLVAPHNKPRPASSRPHPATHPTQRPCFTCMGRPEIPDEPSWQTGDDDPQNPGPPLAVGDEWPPSSHVCYPITNL</sequence>
<organism>
    <name type="scientific">Human herpesvirus 2 (strain HG52)</name>
    <name type="common">HHV-2</name>
    <name type="synonym">Human herpes simplex virus 2</name>
    <dbReference type="NCBI Taxonomy" id="10315"/>
    <lineage>
        <taxon>Viruses</taxon>
        <taxon>Duplodnaviria</taxon>
        <taxon>Heunggongvirae</taxon>
        <taxon>Peploviricota</taxon>
        <taxon>Herviviricetes</taxon>
        <taxon>Herpesvirales</taxon>
        <taxon>Orthoherpesviridae</taxon>
        <taxon>Alphaherpesvirinae</taxon>
        <taxon>Simplexvirus</taxon>
        <taxon>Simplexvirus humanalpha2</taxon>
        <taxon>Human herpesvirus 2</taxon>
    </lineage>
</organism>
<comment type="function">
    <text evidence="5">Plays a role in the activation of the host NF-kappa-B pathway by interacting with and thus activating the component MAP3K7.</text>
</comment>
<comment type="subunit">
    <text evidence="3 5">Interacts with host KRT18 (PubMed:11765921). Interacts with host MAP3K7; this interaction induces host NF-kappa-B pathway (PubMed:28827540).</text>
</comment>
<comment type="subcellular location">
    <subcellularLocation>
        <location evidence="4">Virion</location>
    </subcellularLocation>
    <subcellularLocation>
        <location evidence="4 6">Host cytoplasm</location>
    </subcellularLocation>
    <subcellularLocation>
        <location evidence="4">Host cell surface</location>
    </subcellularLocation>
    <subcellularLocation>
        <location evidence="6">Host nucleus</location>
    </subcellularLocation>
    <text>Found in association with the nuclear matrix of infected cells.</text>
</comment>
<comment type="similarity">
    <text evidence="7">Belongs to the herpesviridae HHV-1 US2 protein family.</text>
</comment>
<protein>
    <recommendedName>
        <fullName>Protein US2</fullName>
    </recommendedName>
</protein>
<keyword id="KW-0007">Acetylation</keyword>
<keyword id="KW-1074">Activation of host NF-kappa-B by virus</keyword>
<keyword id="KW-1035">Host cytoplasm</keyword>
<keyword id="KW-1048">Host nucleus</keyword>
<keyword id="KW-0945">Host-virus interaction</keyword>
<keyword id="KW-1185">Reference proteome</keyword>
<keyword id="KW-0946">Virion</keyword>
<organismHost>
    <name type="scientific">Homo sapiens</name>
    <name type="common">Human</name>
    <dbReference type="NCBI Taxonomy" id="9606"/>
</organismHost>
<evidence type="ECO:0000250" key="1"/>
<evidence type="ECO:0000256" key="2">
    <source>
        <dbReference type="SAM" id="MobiDB-lite"/>
    </source>
</evidence>
<evidence type="ECO:0000269" key="3">
    <source>
    </source>
</evidence>
<evidence type="ECO:0000269" key="4">
    <source>
    </source>
</evidence>
<evidence type="ECO:0000269" key="5">
    <source>
    </source>
</evidence>
<evidence type="ECO:0000269" key="6">
    <source>
    </source>
</evidence>
<evidence type="ECO:0000305" key="7"/>
<feature type="initiator methionine" description="Removed; by host" evidence="1">
    <location>
        <position position="1"/>
    </location>
</feature>
<feature type="chain" id="PRO_0000116127" description="Protein US2">
    <location>
        <begin position="2"/>
        <end position="291"/>
    </location>
</feature>
<feature type="region of interest" description="Disordered" evidence="2">
    <location>
        <begin position="223"/>
        <end position="281"/>
    </location>
</feature>
<feature type="modified residue" description="N-acetylglycine; by host" evidence="1">
    <location>
        <position position="2"/>
    </location>
</feature>
<reference key="1">
    <citation type="journal article" date="1987" name="J. Gen. Virol.">
        <title>DNA sequence and genetic content of the HindIII l region in the short unique component of the herpes simplex virus type 2 genome: identification of the gene encoding glycoprotein G, and evolutionary comparisons.</title>
        <authorList>
            <person name="McGeoch D.J."/>
            <person name="Moss H.W.M."/>
            <person name="McNab D."/>
            <person name="Frame M.C."/>
        </authorList>
    </citation>
    <scope>NUCLEOTIDE SEQUENCE [GENOMIC DNA]</scope>
</reference>
<reference key="2">
    <citation type="journal article" date="1998" name="J. Virol.">
        <title>The genome sequence of herpes simplex virus type 2.</title>
        <authorList>
            <person name="Dolan A."/>
            <person name="Jamieson F.E."/>
            <person name="Cunningham C."/>
            <person name="Barnett B.C."/>
            <person name="McGeoch D.J."/>
        </authorList>
    </citation>
    <scope>NUCLEOTIDE SEQUENCE [LARGE SCALE GENOMIC DNA]</scope>
</reference>
<reference key="3">
    <citation type="journal article" date="1998" name="J. Gen. Virol.">
        <title>Characterization of the herpes simplex virus type 2 (HSV-2) US2 gene product and a US2-deficient HSV-2 mutant.</title>
        <authorList>
            <person name="Jiang Y.M."/>
            <person name="Yamada H."/>
            <person name="Goshima F."/>
            <person name="Daikoku T."/>
            <person name="Oshima S."/>
            <person name="Wada K."/>
            <person name="Nishiyama Y."/>
        </authorList>
    </citation>
    <scope>SUBCELLULAR LOCATION</scope>
</reference>
<reference key="4">
    <citation type="journal article" date="2001" name="Arch. Virol.">
        <title>The US2 gene product of herpes simplex virus type 2 interacts with cytokeratin 18.</title>
        <authorList>
            <person name="Goshima F."/>
            <person name="Watanabe D."/>
            <person name="Suzuki H."/>
            <person name="Takakuwa H."/>
            <person name="Yamada H."/>
            <person name="Nishiyama Y."/>
        </authorList>
    </citation>
    <scope>INTERACTION WITH HOST KRT18</scope>
</reference>
<reference key="5">
    <citation type="journal article" date="2013" name="J. Virol.">
        <title>The Us2 gene product of herpes simplex virus 2 is a membrane-associated ubiquitin-interacting protein.</title>
        <authorList>
            <person name="Kang M.H."/>
            <person name="Roy B.B."/>
            <person name="Finnen R.L."/>
            <person name="Le Sage V."/>
            <person name="Johnston S.M."/>
            <person name="Zhang H."/>
            <person name="Banfield B.W."/>
        </authorList>
    </citation>
    <scope>SUBCELLULAR LOCATION</scope>
    <scope>FUNCTION</scope>
</reference>
<reference key="6">
    <citation type="journal article" date="2017" name="Sci. Rep.">
        <title>The Us2 Gene Product of herpes dimplex virus 2 modulates NF-kappaB activation by targeting TAK1.</title>
        <authorList>
            <person name="Lu X."/>
            <person name="Huang C."/>
            <person name="Zhang Y."/>
            <person name="Lin Y."/>
            <person name="Wang X."/>
            <person name="Li Q."/>
            <person name="Liu S."/>
            <person name="Tang J."/>
            <person name="Zhou L."/>
        </authorList>
    </citation>
    <scope>FUNCTION</scope>
</reference>
<gene>
    <name type="ORF">US2</name>
</gene>
<dbReference type="EMBL" id="X04798">
    <property type="protein sequence ID" value="CAA28487.1"/>
    <property type="molecule type" value="Genomic_DNA"/>
</dbReference>
<dbReference type="EMBL" id="Z86099">
    <property type="protein sequence ID" value="CAB06709.1"/>
    <property type="molecule type" value="Genomic_DNA"/>
</dbReference>
<dbReference type="PIR" id="A43674">
    <property type="entry name" value="A43674"/>
</dbReference>
<dbReference type="RefSeq" id="YP_009137214.1">
    <property type="nucleotide sequence ID" value="NC_001798.2"/>
</dbReference>
<dbReference type="DNASU" id="1487354"/>
<dbReference type="GeneID" id="1487354"/>
<dbReference type="KEGG" id="vg:1487354"/>
<dbReference type="Proteomes" id="UP000001874">
    <property type="component" value="Segment"/>
</dbReference>
<dbReference type="GO" id="GO:0030430">
    <property type="term" value="C:host cell cytoplasm"/>
    <property type="evidence" value="ECO:0007669"/>
    <property type="project" value="UniProtKB-SubCell"/>
</dbReference>
<dbReference type="GO" id="GO:0042025">
    <property type="term" value="C:host cell nucleus"/>
    <property type="evidence" value="ECO:0007669"/>
    <property type="project" value="UniProtKB-SubCell"/>
</dbReference>
<dbReference type="GO" id="GO:0044228">
    <property type="term" value="C:host cell surface"/>
    <property type="evidence" value="ECO:0007669"/>
    <property type="project" value="UniProtKB-SubCell"/>
</dbReference>
<dbReference type="GO" id="GO:0044423">
    <property type="term" value="C:virion component"/>
    <property type="evidence" value="ECO:0007669"/>
    <property type="project" value="UniProtKB-KW"/>
</dbReference>
<dbReference type="GO" id="GO:0085033">
    <property type="term" value="P:symbiont-mediated activation of host NF-kappaB cascade"/>
    <property type="evidence" value="ECO:0000314"/>
    <property type="project" value="UniProtKB"/>
</dbReference>
<dbReference type="InterPro" id="IPR003485">
    <property type="entry name" value="Herpes_US2_varicellovirus"/>
</dbReference>
<dbReference type="InterPro" id="IPR036179">
    <property type="entry name" value="Ig-like_dom_sf"/>
</dbReference>
<dbReference type="Pfam" id="PF02476">
    <property type="entry name" value="US2"/>
    <property type="match status" value="1"/>
</dbReference>
<dbReference type="SUPFAM" id="SSF48726">
    <property type="entry name" value="Immunoglobulin"/>
    <property type="match status" value="1"/>
</dbReference>